<evidence type="ECO:0000255" key="1"/>
<evidence type="ECO:0000305" key="2"/>
<gene>
    <name type="primary">psrC</name>
    <name type="ordered locus">WS0118</name>
</gene>
<accession>P31077</accession>
<reference key="1">
    <citation type="journal article" date="1992" name="Eur. J. Biochem.">
        <title>Cloning and nucleotide sequence of the psrA gene of Wolinella succinogenes polysulphide reductase.</title>
        <authorList>
            <person name="Krafft T."/>
            <person name="Bokranz M."/>
            <person name="Klimmek O."/>
            <person name="Schroeder I."/>
            <person name="Fahrenholz F."/>
            <person name="Kojro E."/>
            <person name="Kroeger A."/>
        </authorList>
    </citation>
    <scope>NUCLEOTIDE SEQUENCE [GENOMIC DNA]</scope>
</reference>
<reference key="2">
    <citation type="journal article" date="2003" name="Proc. Natl. Acad. Sci. U.S.A.">
        <title>Complete genome sequence and analysis of Wolinella succinogenes.</title>
        <authorList>
            <person name="Baar C."/>
            <person name="Eppinger M."/>
            <person name="Raddatz G."/>
            <person name="Simon J."/>
            <person name="Lanz C."/>
            <person name="Klimmek O."/>
            <person name="Nandakumar R."/>
            <person name="Gross R."/>
            <person name="Rosinus A."/>
            <person name="Keller H."/>
            <person name="Jagtap P."/>
            <person name="Linke B."/>
            <person name="Meyer F."/>
            <person name="Lederer H."/>
            <person name="Schuster S.C."/>
        </authorList>
    </citation>
    <scope>NUCLEOTIDE SEQUENCE [LARGE SCALE GENOMIC DNA]</scope>
    <source>
        <strain>ATCC 29543 / DSM 1740 / CCUG 13145 / JCM 31913 / LMG 7466 / NCTC 11488 / FDC 602W</strain>
    </source>
</reference>
<keyword id="KW-0997">Cell inner membrane</keyword>
<keyword id="KW-1003">Cell membrane</keyword>
<keyword id="KW-0472">Membrane</keyword>
<keyword id="KW-1185">Reference proteome</keyword>
<keyword id="KW-0812">Transmembrane</keyword>
<keyword id="KW-1133">Transmembrane helix</keyword>
<feature type="chain" id="PRO_0000159327" description="Polysulfide reductase chain C">
    <location>
        <begin position="1"/>
        <end position="317"/>
    </location>
</feature>
<feature type="transmembrane region" description="Helical" evidence="1">
    <location>
        <begin position="20"/>
        <end position="40"/>
    </location>
</feature>
<feature type="transmembrane region" description="Helical" evidence="1">
    <location>
        <begin position="54"/>
        <end position="75"/>
    </location>
</feature>
<feature type="transmembrane region" description="Helical" evidence="1">
    <location>
        <begin position="98"/>
        <end position="118"/>
    </location>
</feature>
<feature type="transmembrane region" description="Helical" evidence="1">
    <location>
        <begin position="147"/>
        <end position="167"/>
    </location>
</feature>
<feature type="transmembrane region" description="Helical" evidence="1">
    <location>
        <begin position="182"/>
        <end position="202"/>
    </location>
</feature>
<feature type="transmembrane region" description="Helical" evidence="1">
    <location>
        <begin position="221"/>
        <end position="237"/>
    </location>
</feature>
<feature type="transmembrane region" description="Helical" evidence="1">
    <location>
        <begin position="259"/>
        <end position="279"/>
    </location>
</feature>
<feature type="transmembrane region" description="Helical" evidence="1">
    <location>
        <begin position="289"/>
        <end position="309"/>
    </location>
</feature>
<sequence>MNQMWGSIEQYNTVVWHWPIAVYLFLAGLSAGAIISAIIIKWMKGNESSPWDGIIKAGALIAPLTIGAGLLLLIFDLTRPLHFWKLLIFYNFSSVMTLGVLALFAYFPVVLIFLLGVFKKELCDEGPFGFLAPLANIAYSMARPLEIVTFVLAIGVGAYTGFLLSAMYSYPLLNTPILPLLFLASGISAGISGNLLIGLLFFGKSTKGENVGYLHGLDFKVILFEAFLLFILFVGMYYQGGSTAEVAKAALTTGGLASLFWLGVAGMGLALPVVLNVALPHGIKHSSGFVMLNALIVLAGVMALRFYILYAGQTFVG</sequence>
<proteinExistence type="inferred from homology"/>
<comment type="function">
    <text>Could possibly serve as the membrane anchor of the enzyme.</text>
</comment>
<comment type="function">
    <text>Component of the phosphorylative electron transport system with polysulfide as the terminal acceptor.</text>
</comment>
<comment type="subunit">
    <text>Functional polysulfide reductase is made up of three different (A, B, and C) subunits.</text>
</comment>
<comment type="subcellular location">
    <subcellularLocation>
        <location evidence="2">Cell inner membrane</location>
        <topology evidence="2">Multi-pass membrane protein</topology>
    </subcellularLocation>
</comment>
<comment type="similarity">
    <text evidence="2">Belongs to the NrfD family.</text>
</comment>
<protein>
    <recommendedName>
        <fullName>Polysulfide reductase chain C</fullName>
    </recommendedName>
    <alternativeName>
        <fullName>Sulfur reductase chain C</fullName>
    </alternativeName>
</protein>
<organism>
    <name type="scientific">Wolinella succinogenes (strain ATCC 29543 / DSM 1740 / CCUG 13145 / JCM 31913 / LMG 7466 / NCTC 11488 / FDC 602W)</name>
    <name type="common">Vibrio succinogenes</name>
    <dbReference type="NCBI Taxonomy" id="273121"/>
    <lineage>
        <taxon>Bacteria</taxon>
        <taxon>Pseudomonadati</taxon>
        <taxon>Campylobacterota</taxon>
        <taxon>Epsilonproteobacteria</taxon>
        <taxon>Campylobacterales</taxon>
        <taxon>Helicobacteraceae</taxon>
        <taxon>Wolinella</taxon>
    </lineage>
</organism>
<dbReference type="EMBL" id="X65042">
    <property type="protein sequence ID" value="CAA46178.1"/>
    <property type="molecule type" value="Genomic_DNA"/>
</dbReference>
<dbReference type="EMBL" id="BX571657">
    <property type="protein sequence ID" value="CAE09283.1"/>
    <property type="molecule type" value="Genomic_DNA"/>
</dbReference>
<dbReference type="PIR" id="S23459">
    <property type="entry name" value="S23459"/>
</dbReference>
<dbReference type="RefSeq" id="WP_011138083.1">
    <property type="nucleotide sequence ID" value="NC_005090.1"/>
</dbReference>
<dbReference type="SMR" id="P31077"/>
<dbReference type="STRING" id="273121.WS0118"/>
<dbReference type="TCDB" id="5.A.3.5.2">
    <property type="family name" value="the prokaryotic molybdopterin-containing oxidoreductase (pmo) family"/>
</dbReference>
<dbReference type="KEGG" id="wsu:WS0118"/>
<dbReference type="eggNOG" id="COG3301">
    <property type="taxonomic scope" value="Bacteria"/>
</dbReference>
<dbReference type="HOGENOM" id="CLU_045348_1_2_7"/>
<dbReference type="BioCyc" id="MetaCyc:MONOMER-12583"/>
<dbReference type="Proteomes" id="UP000000422">
    <property type="component" value="Chromosome"/>
</dbReference>
<dbReference type="GO" id="GO:0005886">
    <property type="term" value="C:plasma membrane"/>
    <property type="evidence" value="ECO:0007669"/>
    <property type="project" value="UniProtKB-SubCell"/>
</dbReference>
<dbReference type="Gene3D" id="1.20.1630.10">
    <property type="entry name" value="Formate dehydrogenase/DMSO reductase domain"/>
    <property type="match status" value="1"/>
</dbReference>
<dbReference type="InterPro" id="IPR052049">
    <property type="entry name" value="Electron_transfer_protein"/>
</dbReference>
<dbReference type="InterPro" id="IPR005614">
    <property type="entry name" value="NrfD-like"/>
</dbReference>
<dbReference type="PANTHER" id="PTHR34856">
    <property type="entry name" value="PROTEIN NRFD"/>
    <property type="match status" value="1"/>
</dbReference>
<dbReference type="PANTHER" id="PTHR34856:SF2">
    <property type="entry name" value="PROTEIN NRFD"/>
    <property type="match status" value="1"/>
</dbReference>
<dbReference type="Pfam" id="PF03916">
    <property type="entry name" value="NrfD"/>
    <property type="match status" value="1"/>
</dbReference>
<name>PSRC_WOLSU</name>